<sequence length="121" mass="13581">MARIAGINIPPHKHAEIGLTSIYGVGRTTAQKICEACGIAYNKKVKDLDDSDLEKIREEVGRLTIEGDLRREISINIKRLMDLGCYRGFRHRRGLPVRGQRTRTNSRTRKGPKKGAAALKK</sequence>
<feature type="chain" id="PRO_1000141281" description="Small ribosomal subunit protein uS13">
    <location>
        <begin position="1"/>
        <end position="121"/>
    </location>
</feature>
<feature type="region of interest" description="Disordered" evidence="2">
    <location>
        <begin position="94"/>
        <end position="121"/>
    </location>
</feature>
<organism>
    <name type="scientific">Leptothrix cholodnii (strain ATCC 51168 / LMG 8142 / SP-6)</name>
    <name type="common">Leptothrix discophora (strain SP-6)</name>
    <dbReference type="NCBI Taxonomy" id="395495"/>
    <lineage>
        <taxon>Bacteria</taxon>
        <taxon>Pseudomonadati</taxon>
        <taxon>Pseudomonadota</taxon>
        <taxon>Betaproteobacteria</taxon>
        <taxon>Burkholderiales</taxon>
        <taxon>Sphaerotilaceae</taxon>
        <taxon>Leptothrix</taxon>
    </lineage>
</organism>
<reference key="1">
    <citation type="submission" date="2008-03" db="EMBL/GenBank/DDBJ databases">
        <title>Complete sequence of Leptothrix cholodnii SP-6.</title>
        <authorList>
            <consortium name="US DOE Joint Genome Institute"/>
            <person name="Copeland A."/>
            <person name="Lucas S."/>
            <person name="Lapidus A."/>
            <person name="Glavina del Rio T."/>
            <person name="Dalin E."/>
            <person name="Tice H."/>
            <person name="Bruce D."/>
            <person name="Goodwin L."/>
            <person name="Pitluck S."/>
            <person name="Chertkov O."/>
            <person name="Brettin T."/>
            <person name="Detter J.C."/>
            <person name="Han C."/>
            <person name="Kuske C.R."/>
            <person name="Schmutz J."/>
            <person name="Larimer F."/>
            <person name="Land M."/>
            <person name="Hauser L."/>
            <person name="Kyrpides N."/>
            <person name="Lykidis A."/>
            <person name="Emerson D."/>
            <person name="Richardson P."/>
        </authorList>
    </citation>
    <scope>NUCLEOTIDE SEQUENCE [LARGE SCALE GENOMIC DNA]</scope>
    <source>
        <strain>ATCC 51168 / LMG 8142 / SP-6</strain>
    </source>
</reference>
<protein>
    <recommendedName>
        <fullName evidence="1">Small ribosomal subunit protein uS13</fullName>
    </recommendedName>
    <alternativeName>
        <fullName evidence="3">30S ribosomal protein S13</fullName>
    </alternativeName>
</protein>
<comment type="function">
    <text evidence="1">Located at the top of the head of the 30S subunit, it contacts several helices of the 16S rRNA. In the 70S ribosome it contacts the 23S rRNA (bridge B1a) and protein L5 of the 50S subunit (bridge B1b), connecting the 2 subunits; these bridges are implicated in subunit movement. Contacts the tRNAs in the A and P-sites.</text>
</comment>
<comment type="subunit">
    <text evidence="1">Part of the 30S ribosomal subunit. Forms a loose heterodimer with protein S19. Forms two bridges to the 50S subunit in the 70S ribosome.</text>
</comment>
<comment type="similarity">
    <text evidence="1">Belongs to the universal ribosomal protein uS13 family.</text>
</comment>
<gene>
    <name evidence="1" type="primary">rpsM</name>
    <name type="ordered locus">Lcho_3926</name>
</gene>
<keyword id="KW-1185">Reference proteome</keyword>
<keyword id="KW-0687">Ribonucleoprotein</keyword>
<keyword id="KW-0689">Ribosomal protein</keyword>
<keyword id="KW-0694">RNA-binding</keyword>
<keyword id="KW-0699">rRNA-binding</keyword>
<keyword id="KW-0820">tRNA-binding</keyword>
<name>RS13_LEPCP</name>
<accession>B1Y8B4</accession>
<evidence type="ECO:0000255" key="1">
    <source>
        <dbReference type="HAMAP-Rule" id="MF_01315"/>
    </source>
</evidence>
<evidence type="ECO:0000256" key="2">
    <source>
        <dbReference type="SAM" id="MobiDB-lite"/>
    </source>
</evidence>
<evidence type="ECO:0000305" key="3"/>
<proteinExistence type="inferred from homology"/>
<dbReference type="EMBL" id="CP001013">
    <property type="protein sequence ID" value="ACB36180.1"/>
    <property type="molecule type" value="Genomic_DNA"/>
</dbReference>
<dbReference type="RefSeq" id="WP_012348926.1">
    <property type="nucleotide sequence ID" value="NC_010524.1"/>
</dbReference>
<dbReference type="SMR" id="B1Y8B4"/>
<dbReference type="STRING" id="395495.Lcho_3926"/>
<dbReference type="KEGG" id="lch:Lcho_3926"/>
<dbReference type="eggNOG" id="COG0099">
    <property type="taxonomic scope" value="Bacteria"/>
</dbReference>
<dbReference type="HOGENOM" id="CLU_103849_1_2_4"/>
<dbReference type="OrthoDB" id="9803610at2"/>
<dbReference type="Proteomes" id="UP000001693">
    <property type="component" value="Chromosome"/>
</dbReference>
<dbReference type="GO" id="GO:0005829">
    <property type="term" value="C:cytosol"/>
    <property type="evidence" value="ECO:0007669"/>
    <property type="project" value="TreeGrafter"/>
</dbReference>
<dbReference type="GO" id="GO:0015935">
    <property type="term" value="C:small ribosomal subunit"/>
    <property type="evidence" value="ECO:0007669"/>
    <property type="project" value="TreeGrafter"/>
</dbReference>
<dbReference type="GO" id="GO:0019843">
    <property type="term" value="F:rRNA binding"/>
    <property type="evidence" value="ECO:0007669"/>
    <property type="project" value="UniProtKB-UniRule"/>
</dbReference>
<dbReference type="GO" id="GO:0003735">
    <property type="term" value="F:structural constituent of ribosome"/>
    <property type="evidence" value="ECO:0007669"/>
    <property type="project" value="InterPro"/>
</dbReference>
<dbReference type="GO" id="GO:0000049">
    <property type="term" value="F:tRNA binding"/>
    <property type="evidence" value="ECO:0007669"/>
    <property type="project" value="UniProtKB-UniRule"/>
</dbReference>
<dbReference type="GO" id="GO:0006412">
    <property type="term" value="P:translation"/>
    <property type="evidence" value="ECO:0007669"/>
    <property type="project" value="UniProtKB-UniRule"/>
</dbReference>
<dbReference type="FunFam" id="1.10.8.50:FF:000001">
    <property type="entry name" value="30S ribosomal protein S13"/>
    <property type="match status" value="1"/>
</dbReference>
<dbReference type="FunFam" id="4.10.910.10:FF:000001">
    <property type="entry name" value="30S ribosomal protein S13"/>
    <property type="match status" value="1"/>
</dbReference>
<dbReference type="Gene3D" id="1.10.8.50">
    <property type="match status" value="1"/>
</dbReference>
<dbReference type="Gene3D" id="4.10.910.10">
    <property type="entry name" value="30s ribosomal protein s13, domain 2"/>
    <property type="match status" value="1"/>
</dbReference>
<dbReference type="HAMAP" id="MF_01315">
    <property type="entry name" value="Ribosomal_uS13"/>
    <property type="match status" value="1"/>
</dbReference>
<dbReference type="InterPro" id="IPR027437">
    <property type="entry name" value="Rbsml_uS13_C"/>
</dbReference>
<dbReference type="InterPro" id="IPR001892">
    <property type="entry name" value="Ribosomal_uS13"/>
</dbReference>
<dbReference type="InterPro" id="IPR010979">
    <property type="entry name" value="Ribosomal_uS13-like_H2TH"/>
</dbReference>
<dbReference type="InterPro" id="IPR019980">
    <property type="entry name" value="Ribosomal_uS13_bac-type"/>
</dbReference>
<dbReference type="InterPro" id="IPR018269">
    <property type="entry name" value="Ribosomal_uS13_CS"/>
</dbReference>
<dbReference type="NCBIfam" id="TIGR03631">
    <property type="entry name" value="uS13_bact"/>
    <property type="match status" value="1"/>
</dbReference>
<dbReference type="PANTHER" id="PTHR10871">
    <property type="entry name" value="30S RIBOSOMAL PROTEIN S13/40S RIBOSOMAL PROTEIN S18"/>
    <property type="match status" value="1"/>
</dbReference>
<dbReference type="PANTHER" id="PTHR10871:SF1">
    <property type="entry name" value="SMALL RIBOSOMAL SUBUNIT PROTEIN US13M"/>
    <property type="match status" value="1"/>
</dbReference>
<dbReference type="Pfam" id="PF00416">
    <property type="entry name" value="Ribosomal_S13"/>
    <property type="match status" value="1"/>
</dbReference>
<dbReference type="PIRSF" id="PIRSF002134">
    <property type="entry name" value="Ribosomal_S13"/>
    <property type="match status" value="1"/>
</dbReference>
<dbReference type="SUPFAM" id="SSF46946">
    <property type="entry name" value="S13-like H2TH domain"/>
    <property type="match status" value="1"/>
</dbReference>
<dbReference type="PROSITE" id="PS00646">
    <property type="entry name" value="RIBOSOMAL_S13_1"/>
    <property type="match status" value="1"/>
</dbReference>
<dbReference type="PROSITE" id="PS50159">
    <property type="entry name" value="RIBOSOMAL_S13_2"/>
    <property type="match status" value="1"/>
</dbReference>